<gene>
    <name type="primary">EDR2L</name>
    <name type="ordered locus">At5g45560</name>
    <name type="ORF">MFC19.23</name>
</gene>
<keyword id="KW-1003">Cell membrane</keyword>
<keyword id="KW-0256">Endoplasmic reticulum</keyword>
<keyword id="KW-0967">Endosome</keyword>
<keyword id="KW-0472">Membrane</keyword>
<keyword id="KW-0611">Plant defense</keyword>
<keyword id="KW-1185">Reference proteome</keyword>
<keyword id="KW-0812">Transmembrane</keyword>
<keyword id="KW-1133">Transmembrane helix</keyword>
<dbReference type="EMBL" id="AB022213">
    <property type="protein sequence ID" value="BAB11194.1"/>
    <property type="status" value="ALT_SEQ"/>
    <property type="molecule type" value="Genomic_DNA"/>
</dbReference>
<dbReference type="EMBL" id="AB018113">
    <property type="protein sequence ID" value="BAB11194.1"/>
    <property type="status" value="JOINED"/>
    <property type="molecule type" value="Genomic_DNA"/>
</dbReference>
<dbReference type="EMBL" id="CP002688">
    <property type="protein sequence ID" value="AED95268.1"/>
    <property type="molecule type" value="Genomic_DNA"/>
</dbReference>
<dbReference type="EMBL" id="AY064989">
    <property type="protein sequence ID" value="AAL57642.1"/>
    <property type="molecule type" value="mRNA"/>
</dbReference>
<dbReference type="RefSeq" id="NP_199369.2">
    <property type="nucleotide sequence ID" value="NM_123924.3"/>
</dbReference>
<dbReference type="SMR" id="Q8VZF6"/>
<dbReference type="FunCoup" id="Q8VZF6">
    <property type="interactions" value="589"/>
</dbReference>
<dbReference type="STRING" id="3702.Q8VZF6"/>
<dbReference type="iPTMnet" id="Q8VZF6"/>
<dbReference type="PaxDb" id="3702-AT5G45560.1"/>
<dbReference type="ProteomicsDB" id="224739"/>
<dbReference type="EnsemblPlants" id="AT5G45560.1">
    <property type="protein sequence ID" value="AT5G45560.1"/>
    <property type="gene ID" value="AT5G45560"/>
</dbReference>
<dbReference type="GeneID" id="834592"/>
<dbReference type="Gramene" id="AT5G45560.1">
    <property type="protein sequence ID" value="AT5G45560.1"/>
    <property type="gene ID" value="AT5G45560"/>
</dbReference>
<dbReference type="KEGG" id="ath:AT5G45560"/>
<dbReference type="Araport" id="AT5G45560"/>
<dbReference type="TAIR" id="AT5G45560"/>
<dbReference type="eggNOG" id="ENOG502QS0N">
    <property type="taxonomic scope" value="Eukaryota"/>
</dbReference>
<dbReference type="HOGENOM" id="CLU_018946_0_0_1"/>
<dbReference type="InParanoid" id="Q8VZF6"/>
<dbReference type="OMA" id="FRAKHEN"/>
<dbReference type="PhylomeDB" id="Q8VZF6"/>
<dbReference type="PRO" id="PR:Q8VZF6"/>
<dbReference type="Proteomes" id="UP000006548">
    <property type="component" value="Chromosome 5"/>
</dbReference>
<dbReference type="ExpressionAtlas" id="Q8VZF6">
    <property type="expression patterns" value="baseline and differential"/>
</dbReference>
<dbReference type="GO" id="GO:0005789">
    <property type="term" value="C:endoplasmic reticulum membrane"/>
    <property type="evidence" value="ECO:0007669"/>
    <property type="project" value="UniProtKB-SubCell"/>
</dbReference>
<dbReference type="GO" id="GO:0010008">
    <property type="term" value="C:endosome membrane"/>
    <property type="evidence" value="ECO:0007669"/>
    <property type="project" value="UniProtKB-SubCell"/>
</dbReference>
<dbReference type="GO" id="GO:0005886">
    <property type="term" value="C:plasma membrane"/>
    <property type="evidence" value="ECO:0007669"/>
    <property type="project" value="UniProtKB-SubCell"/>
</dbReference>
<dbReference type="GO" id="GO:0008289">
    <property type="term" value="F:lipid binding"/>
    <property type="evidence" value="ECO:0007669"/>
    <property type="project" value="InterPro"/>
</dbReference>
<dbReference type="GO" id="GO:0006952">
    <property type="term" value="P:defense response"/>
    <property type="evidence" value="ECO:0007669"/>
    <property type="project" value="UniProtKB-KW"/>
</dbReference>
<dbReference type="CDD" id="cd00821">
    <property type="entry name" value="PH"/>
    <property type="match status" value="1"/>
</dbReference>
<dbReference type="CDD" id="cd00177">
    <property type="entry name" value="START"/>
    <property type="match status" value="1"/>
</dbReference>
<dbReference type="FunFam" id="3.30.530.20:FF:000035">
    <property type="entry name" value="ENHANCED DISEASE RESISTANCE 2"/>
    <property type="match status" value="1"/>
</dbReference>
<dbReference type="FunFam" id="2.30.29.30:FF:000359">
    <property type="entry name" value="Protein ENHANCED DISEASE RESISTANCE 2-like"/>
    <property type="match status" value="1"/>
</dbReference>
<dbReference type="Gene3D" id="3.30.530.20">
    <property type="match status" value="1"/>
</dbReference>
<dbReference type="Gene3D" id="2.30.29.30">
    <property type="entry name" value="Pleckstrin-homology domain (PH domain)/Phosphotyrosine-binding domain (PTB)"/>
    <property type="match status" value="1"/>
</dbReference>
<dbReference type="InterPro" id="IPR045096">
    <property type="entry name" value="EDR2-like"/>
</dbReference>
<dbReference type="InterPro" id="IPR009769">
    <property type="entry name" value="EDR2_C"/>
</dbReference>
<dbReference type="InterPro" id="IPR011993">
    <property type="entry name" value="PH-like_dom_sf"/>
</dbReference>
<dbReference type="InterPro" id="IPR001849">
    <property type="entry name" value="PH_domain"/>
</dbReference>
<dbReference type="InterPro" id="IPR023393">
    <property type="entry name" value="START-like_dom_sf"/>
</dbReference>
<dbReference type="InterPro" id="IPR002913">
    <property type="entry name" value="START_lipid-bd_dom"/>
</dbReference>
<dbReference type="PANTHER" id="PTHR12136">
    <property type="entry name" value="ENHANCED DISEASE RESISTANCE-RELATED"/>
    <property type="match status" value="1"/>
</dbReference>
<dbReference type="PANTHER" id="PTHR12136:SF100">
    <property type="entry name" value="PROTEIN ENHANCED DISEASE RESISTANCE 2-LIKE"/>
    <property type="match status" value="1"/>
</dbReference>
<dbReference type="Pfam" id="PF07059">
    <property type="entry name" value="EDR2_C"/>
    <property type="match status" value="1"/>
</dbReference>
<dbReference type="Pfam" id="PF00169">
    <property type="entry name" value="PH"/>
    <property type="match status" value="1"/>
</dbReference>
<dbReference type="Pfam" id="PF01852">
    <property type="entry name" value="START"/>
    <property type="match status" value="1"/>
</dbReference>
<dbReference type="SMART" id="SM00233">
    <property type="entry name" value="PH"/>
    <property type="match status" value="1"/>
</dbReference>
<dbReference type="SMART" id="SM00234">
    <property type="entry name" value="START"/>
    <property type="match status" value="1"/>
</dbReference>
<dbReference type="SUPFAM" id="SSF55961">
    <property type="entry name" value="Bet v1-like"/>
    <property type="match status" value="1"/>
</dbReference>
<dbReference type="SUPFAM" id="SSF50729">
    <property type="entry name" value="PH domain-like"/>
    <property type="match status" value="1"/>
</dbReference>
<dbReference type="PROSITE" id="PS50003">
    <property type="entry name" value="PH_DOMAIN"/>
    <property type="match status" value="1"/>
</dbReference>
<dbReference type="PROSITE" id="PS50848">
    <property type="entry name" value="START"/>
    <property type="match status" value="1"/>
</dbReference>
<feature type="chain" id="PRO_0000428906" description="Protein ENHANCED DISEASE RESISTANCE 2-like">
    <location>
        <begin position="1"/>
        <end position="719"/>
    </location>
</feature>
<feature type="transmembrane region" description="Helical" evidence="2">
    <location>
        <begin position="665"/>
        <end position="685"/>
    </location>
</feature>
<feature type="domain" description="PH" evidence="3">
    <location>
        <begin position="3"/>
        <end position="110"/>
    </location>
</feature>
<feature type="domain" description="START" evidence="4">
    <location>
        <begin position="180"/>
        <end position="392"/>
    </location>
</feature>
<feature type="region of interest" description="Disordered" evidence="5">
    <location>
        <begin position="134"/>
        <end position="173"/>
    </location>
</feature>
<feature type="region of interest" description="Disordered" evidence="5">
    <location>
        <begin position="414"/>
        <end position="478"/>
    </location>
</feature>
<feature type="compositionally biased region" description="Polar residues" evidence="5">
    <location>
        <begin position="426"/>
        <end position="439"/>
    </location>
</feature>
<feature type="compositionally biased region" description="Acidic residues" evidence="5">
    <location>
        <begin position="442"/>
        <end position="461"/>
    </location>
</feature>
<feature type="compositionally biased region" description="Basic and acidic residues" evidence="5">
    <location>
        <begin position="462"/>
        <end position="477"/>
    </location>
</feature>
<reference key="1">
    <citation type="journal article" date="2000" name="DNA Res.">
        <title>Structural analysis of Arabidopsis thaliana chromosome 5. X. Sequence features of the regions of 3,076,755 bp covered by sixty P1 and TAC clones.</title>
        <authorList>
            <person name="Sato S."/>
            <person name="Nakamura Y."/>
            <person name="Kaneko T."/>
            <person name="Katoh T."/>
            <person name="Asamizu E."/>
            <person name="Kotani H."/>
            <person name="Tabata S."/>
        </authorList>
    </citation>
    <scope>NUCLEOTIDE SEQUENCE [LARGE SCALE GENOMIC DNA]</scope>
    <source>
        <strain>cv. Columbia</strain>
    </source>
</reference>
<reference key="2">
    <citation type="journal article" date="1999" name="DNA Res.">
        <title>Structural analysis of Arabidopsis thaliana chromosome 5. IX. Sequence features of the regions of 1,011,550 bp covered by seventeen P1 and TAC clones.</title>
        <authorList>
            <person name="Kaneko T."/>
            <person name="Katoh T."/>
            <person name="Sato S."/>
            <person name="Nakamura Y."/>
            <person name="Asamizu E."/>
            <person name="Kotani H."/>
            <person name="Miyajima N."/>
            <person name="Tabata S."/>
        </authorList>
    </citation>
    <scope>NUCLEOTIDE SEQUENCE [LARGE SCALE GENOMIC DNA]</scope>
    <source>
        <strain>cv. Columbia</strain>
    </source>
</reference>
<reference key="3">
    <citation type="journal article" date="2017" name="Plant J.">
        <title>Araport11: a complete reannotation of the Arabidopsis thaliana reference genome.</title>
        <authorList>
            <person name="Cheng C.Y."/>
            <person name="Krishnakumar V."/>
            <person name="Chan A.P."/>
            <person name="Thibaud-Nissen F."/>
            <person name="Schobel S."/>
            <person name="Town C.D."/>
        </authorList>
    </citation>
    <scope>GENOME REANNOTATION</scope>
    <source>
        <strain>cv. Columbia</strain>
    </source>
</reference>
<reference key="4">
    <citation type="journal article" date="2003" name="Science">
        <title>Empirical analysis of transcriptional activity in the Arabidopsis genome.</title>
        <authorList>
            <person name="Yamada K."/>
            <person name="Lim J."/>
            <person name="Dale J.M."/>
            <person name="Chen H."/>
            <person name="Shinn P."/>
            <person name="Palm C.J."/>
            <person name="Southwick A.M."/>
            <person name="Wu H.C."/>
            <person name="Kim C.J."/>
            <person name="Nguyen M."/>
            <person name="Pham P.K."/>
            <person name="Cheuk R.F."/>
            <person name="Karlin-Newmann G."/>
            <person name="Liu S.X."/>
            <person name="Lam B."/>
            <person name="Sakano H."/>
            <person name="Wu T."/>
            <person name="Yu G."/>
            <person name="Miranda M."/>
            <person name="Quach H.L."/>
            <person name="Tripp M."/>
            <person name="Chang C.H."/>
            <person name="Lee J.M."/>
            <person name="Toriumi M.J."/>
            <person name="Chan M.M."/>
            <person name="Tang C.C."/>
            <person name="Onodera C.S."/>
            <person name="Deng J.M."/>
            <person name="Akiyama K."/>
            <person name="Ansari Y."/>
            <person name="Arakawa T."/>
            <person name="Banh J."/>
            <person name="Banno F."/>
            <person name="Bowser L."/>
            <person name="Brooks S.Y."/>
            <person name="Carninci P."/>
            <person name="Chao Q."/>
            <person name="Choy N."/>
            <person name="Enju A."/>
            <person name="Goldsmith A.D."/>
            <person name="Gurjal M."/>
            <person name="Hansen N.F."/>
            <person name="Hayashizaki Y."/>
            <person name="Johnson-Hopson C."/>
            <person name="Hsuan V.W."/>
            <person name="Iida K."/>
            <person name="Karnes M."/>
            <person name="Khan S."/>
            <person name="Koesema E."/>
            <person name="Ishida J."/>
            <person name="Jiang P.X."/>
            <person name="Jones T."/>
            <person name="Kawai J."/>
            <person name="Kamiya A."/>
            <person name="Meyers C."/>
            <person name="Nakajima M."/>
            <person name="Narusaka M."/>
            <person name="Seki M."/>
            <person name="Sakurai T."/>
            <person name="Satou M."/>
            <person name="Tamse R."/>
            <person name="Vaysberg M."/>
            <person name="Wallender E.K."/>
            <person name="Wong C."/>
            <person name="Yamamura Y."/>
            <person name="Yuan S."/>
            <person name="Shinozaki K."/>
            <person name="Davis R.W."/>
            <person name="Theologis A."/>
            <person name="Ecker J.R."/>
        </authorList>
    </citation>
    <scope>NUCLEOTIDE SEQUENCE [LARGE SCALE MRNA]</scope>
    <source>
        <strain>cv. Columbia</strain>
    </source>
</reference>
<evidence type="ECO:0000250" key="1"/>
<evidence type="ECO:0000255" key="2"/>
<evidence type="ECO:0000255" key="3">
    <source>
        <dbReference type="PROSITE-ProRule" id="PRU00145"/>
    </source>
</evidence>
<evidence type="ECO:0000255" key="4">
    <source>
        <dbReference type="PROSITE-ProRule" id="PRU00197"/>
    </source>
</evidence>
<evidence type="ECO:0000256" key="5">
    <source>
        <dbReference type="SAM" id="MobiDB-lite"/>
    </source>
</evidence>
<evidence type="ECO:0000305" key="6"/>
<proteinExistence type="evidence at transcript level"/>
<comment type="function">
    <text evidence="1">Binds to phosphatidylinositol-4-phosphate (PtdIns(4)P). May regulate the salicylic acid- (SA-) mediated resistance to pathogens (By similarity).</text>
</comment>
<comment type="subcellular location">
    <subcellularLocation>
        <location evidence="1">Endoplasmic reticulum membrane</location>
        <topology evidence="1">Single-pass membrane protein</topology>
    </subcellularLocation>
    <subcellularLocation>
        <location evidence="1">Cell membrane</location>
        <topology evidence="1">Single-pass membrane protein</topology>
    </subcellularLocation>
    <subcellularLocation>
        <location evidence="1">Endosome membrane</location>
        <topology evidence="1">Single-pass membrane protein</topology>
    </subcellularLocation>
</comment>
<comment type="domain">
    <text evidence="1">The pleckstrin homology domain (3-110) binds to phosphatidylinositol-4-phosphate (PtdIns(4)P).</text>
</comment>
<comment type="sequence caution" evidence="6">
    <conflict type="erroneous gene model prediction">
        <sequence resource="EMBL-CDS" id="BAB11194"/>
    </conflict>
</comment>
<protein>
    <recommendedName>
        <fullName>Protein ENHANCED DISEASE RESISTANCE 2-like</fullName>
    </recommendedName>
</protein>
<accession>Q8VZF6</accession>
<accession>Q9FH45</accession>
<name>EDR2L_ARATH</name>
<organism>
    <name type="scientific">Arabidopsis thaliana</name>
    <name type="common">Mouse-ear cress</name>
    <dbReference type="NCBI Taxonomy" id="3702"/>
    <lineage>
        <taxon>Eukaryota</taxon>
        <taxon>Viridiplantae</taxon>
        <taxon>Streptophyta</taxon>
        <taxon>Embryophyta</taxon>
        <taxon>Tracheophyta</taxon>
        <taxon>Spermatophyta</taxon>
        <taxon>Magnoliopsida</taxon>
        <taxon>eudicotyledons</taxon>
        <taxon>Gunneridae</taxon>
        <taxon>Pentapetalae</taxon>
        <taxon>rosids</taxon>
        <taxon>malvids</taxon>
        <taxon>Brassicales</taxon>
        <taxon>Brassicaceae</taxon>
        <taxon>Camelineae</taxon>
        <taxon>Arabidopsis</taxon>
    </lineage>
</organism>
<sequence>MSKVVYEGWMVRYGRRKIGRSYIHMRYFVLEPRLLAYYKKKPQDNQLPIKTMVIDGNCRVEDRGLKTHHGHMVYVLSIYNKKEKHHRITMAAFNIQEALMWKEKIECVIDQHQDSLVPSGQQYVSFEYKPGMDAGRTASSSDHESPFSALEDENDSQRDLLRRTTIGNGPPESILDWTKEFDAELSNQSSSNQAFSRKHWRLLQCQNGLRIFEELLEVDYLPRSCSRAMKAVGVVEATCEEIFELVMSMDGTRYEWDCSFHNGRLVEEVDGHTAILYHRLLLDWFPMVVWPRDLCYVRYWRRNDDGSYVVLFRSREHENCGPQPGFVRAHLESGGFNIAPLKPRNGRPRTQVQHLIQIDLKGWGSGYLPAFQQHCLLQMLNSVSGLREWFSQTDDRGQPIRIPVMVNMASSSLALGKGGKHHHKSSLSIDQTNGASRNSVLMDEDSDDDDEFQIPDSEPEPETSKQDQETDAKKTEEPALNIDLSCFSGNLRHDDNENARNCWRISDGNNFKVRGKSFCDDKRKIPAGKHLMDLVAVDWFKDTKRMDHVVRRKGCAAQVAAEKGLFSTVVNVQVPGSTHYSMVFYFVTKELVPGSLFQRFVDGDDEFRNSRLKLIPLVPKGSWIVRQSVGSTPCLLGKAVDCNYIRGPTYLEIDVDIGSSTVANGVLGLVIGVITSLVVEMAFLVQANTPEELPERLIGAVRVSHVELSSAIVPNLDSD</sequence>